<keyword id="KW-0687">Ribonucleoprotein</keyword>
<keyword id="KW-0689">Ribosomal protein</keyword>
<keyword id="KW-0694">RNA-binding</keyword>
<keyword id="KW-0699">rRNA-binding</keyword>
<sequence length="89" mass="10454">MAKKSKIAKYQKQLQLIEQYADLRRDLKAKGDYESLRKLPRDSNPNRLKNRDKIDGRPHAYMRKFGVSRINFRDLAHKGQLPGVTKASW</sequence>
<dbReference type="EMBL" id="AE009949">
    <property type="protein sequence ID" value="AAL98433.1"/>
    <property type="molecule type" value="Genomic_DNA"/>
</dbReference>
<dbReference type="RefSeq" id="WP_002982921.1">
    <property type="nucleotide sequence ID" value="NC_003485.1"/>
</dbReference>
<dbReference type="SMR" id="P66426"/>
<dbReference type="GeneID" id="69900252"/>
<dbReference type="KEGG" id="spm:spyM18_1936"/>
<dbReference type="HOGENOM" id="CLU_139869_0_0_9"/>
<dbReference type="GO" id="GO:0005737">
    <property type="term" value="C:cytoplasm"/>
    <property type="evidence" value="ECO:0007669"/>
    <property type="project" value="UniProtKB-ARBA"/>
</dbReference>
<dbReference type="GO" id="GO:0015935">
    <property type="term" value="C:small ribosomal subunit"/>
    <property type="evidence" value="ECO:0007669"/>
    <property type="project" value="TreeGrafter"/>
</dbReference>
<dbReference type="GO" id="GO:0019843">
    <property type="term" value="F:rRNA binding"/>
    <property type="evidence" value="ECO:0007669"/>
    <property type="project" value="UniProtKB-UniRule"/>
</dbReference>
<dbReference type="GO" id="GO:0003735">
    <property type="term" value="F:structural constituent of ribosome"/>
    <property type="evidence" value="ECO:0007669"/>
    <property type="project" value="InterPro"/>
</dbReference>
<dbReference type="GO" id="GO:0006412">
    <property type="term" value="P:translation"/>
    <property type="evidence" value="ECO:0007669"/>
    <property type="project" value="UniProtKB-UniRule"/>
</dbReference>
<dbReference type="Gene3D" id="4.10.830.10">
    <property type="entry name" value="30s Ribosomal Protein S14, Chain N"/>
    <property type="match status" value="1"/>
</dbReference>
<dbReference type="HAMAP" id="MF_00537">
    <property type="entry name" value="Ribosomal_uS14_1"/>
    <property type="match status" value="1"/>
</dbReference>
<dbReference type="InterPro" id="IPR001209">
    <property type="entry name" value="Ribosomal_uS14"/>
</dbReference>
<dbReference type="InterPro" id="IPR023036">
    <property type="entry name" value="Ribosomal_uS14_bac/plastid"/>
</dbReference>
<dbReference type="InterPro" id="IPR043140">
    <property type="entry name" value="Ribosomal_uS14_sf"/>
</dbReference>
<dbReference type="NCBIfam" id="NF006477">
    <property type="entry name" value="PRK08881.1"/>
    <property type="match status" value="1"/>
</dbReference>
<dbReference type="PANTHER" id="PTHR19836">
    <property type="entry name" value="30S RIBOSOMAL PROTEIN S14"/>
    <property type="match status" value="1"/>
</dbReference>
<dbReference type="PANTHER" id="PTHR19836:SF19">
    <property type="entry name" value="SMALL RIBOSOMAL SUBUNIT PROTEIN US14M"/>
    <property type="match status" value="1"/>
</dbReference>
<dbReference type="Pfam" id="PF00253">
    <property type="entry name" value="Ribosomal_S14"/>
    <property type="match status" value="1"/>
</dbReference>
<dbReference type="SUPFAM" id="SSF57716">
    <property type="entry name" value="Glucocorticoid receptor-like (DNA-binding domain)"/>
    <property type="match status" value="1"/>
</dbReference>
<evidence type="ECO:0000255" key="1">
    <source>
        <dbReference type="HAMAP-Rule" id="MF_00537"/>
    </source>
</evidence>
<evidence type="ECO:0000256" key="2">
    <source>
        <dbReference type="SAM" id="MobiDB-lite"/>
    </source>
</evidence>
<evidence type="ECO:0000305" key="3"/>
<accession>P66426</accession>
<accession>Q99Y47</accession>
<gene>
    <name evidence="1" type="primary">rpsN</name>
    <name type="synonym">rpsN.2</name>
    <name type="synonym">rpsN2</name>
    <name type="synonym">rs14</name>
    <name type="ordered locus">spyM18_1936</name>
</gene>
<reference key="1">
    <citation type="journal article" date="2002" name="Proc. Natl. Acad. Sci. U.S.A.">
        <title>Genome sequence and comparative microarray analysis of serotype M18 group A Streptococcus strains associated with acute rheumatic fever outbreaks.</title>
        <authorList>
            <person name="Smoot J.C."/>
            <person name="Barbian K.D."/>
            <person name="Van Gompel J.J."/>
            <person name="Smoot L.M."/>
            <person name="Chaussee M.S."/>
            <person name="Sylva G.L."/>
            <person name="Sturdevant D.E."/>
            <person name="Ricklefs S.M."/>
            <person name="Porcella S.F."/>
            <person name="Parkins L.D."/>
            <person name="Beres S.B."/>
            <person name="Campbell D.S."/>
            <person name="Smith T.M."/>
            <person name="Zhang Q."/>
            <person name="Kapur V."/>
            <person name="Daly J.A."/>
            <person name="Veasy L.G."/>
            <person name="Musser J.M."/>
        </authorList>
    </citation>
    <scope>NUCLEOTIDE SEQUENCE [LARGE SCALE GENOMIC DNA]</scope>
    <source>
        <strain>MGAS8232</strain>
    </source>
</reference>
<organism>
    <name type="scientific">Streptococcus pyogenes serotype M18 (strain MGAS8232)</name>
    <dbReference type="NCBI Taxonomy" id="186103"/>
    <lineage>
        <taxon>Bacteria</taxon>
        <taxon>Bacillati</taxon>
        <taxon>Bacillota</taxon>
        <taxon>Bacilli</taxon>
        <taxon>Lactobacillales</taxon>
        <taxon>Streptococcaceae</taxon>
        <taxon>Streptococcus</taxon>
    </lineage>
</organism>
<name>RS14_STRP8</name>
<protein>
    <recommendedName>
        <fullName evidence="1">Small ribosomal subunit protein uS14A</fullName>
    </recommendedName>
    <alternativeName>
        <fullName evidence="3">30S ribosomal protein S14</fullName>
    </alternativeName>
</protein>
<proteinExistence type="inferred from homology"/>
<feature type="chain" id="PRO_0000130950" description="Small ribosomal subunit protein uS14A">
    <location>
        <begin position="1"/>
        <end position="89"/>
    </location>
</feature>
<feature type="region of interest" description="Disordered" evidence="2">
    <location>
        <begin position="34"/>
        <end position="54"/>
    </location>
</feature>
<comment type="function">
    <text evidence="1">Binds 16S rRNA, required for the assembly of 30S particles and may also be responsible for determining the conformation of the 16S rRNA at the A site.</text>
</comment>
<comment type="subunit">
    <text evidence="1">Part of the 30S ribosomal subunit. Contacts proteins S3 and S10.</text>
</comment>
<comment type="similarity">
    <text evidence="1">Belongs to the universal ribosomal protein uS14 family.</text>
</comment>